<accession>Q9K965</accession>
<protein>
    <recommendedName>
        <fullName evidence="1">Transcription antitermination protein NusB</fullName>
    </recommendedName>
    <alternativeName>
        <fullName evidence="1">Antitermination factor NusB</fullName>
    </alternativeName>
</protein>
<organism>
    <name type="scientific">Halalkalibacterium halodurans (strain ATCC BAA-125 / DSM 18197 / FERM 7344 / JCM 9153 / C-125)</name>
    <name type="common">Bacillus halodurans</name>
    <dbReference type="NCBI Taxonomy" id="272558"/>
    <lineage>
        <taxon>Bacteria</taxon>
        <taxon>Bacillati</taxon>
        <taxon>Bacillota</taxon>
        <taxon>Bacilli</taxon>
        <taxon>Bacillales</taxon>
        <taxon>Bacillaceae</taxon>
        <taxon>Halalkalibacterium (ex Joshi et al. 2022)</taxon>
    </lineage>
</organism>
<evidence type="ECO:0000255" key="1">
    <source>
        <dbReference type="HAMAP-Rule" id="MF_00073"/>
    </source>
</evidence>
<name>NUSB_HALH5</name>
<sequence>MNRRLSRLRAVQALYQMDVIDTSMEKAIESVLDEGEEASSFMSDLVSGTVTHQEELDRLYADHLQGWTVDRIGNVDRAILRMALYELYYVDDIPKNVSFNEAIELAKAFGGEDAGRFINGVLSKTMEAYKPKDK</sequence>
<proteinExistence type="inferred from homology"/>
<reference key="1">
    <citation type="journal article" date="2000" name="Nucleic Acids Res.">
        <title>Complete genome sequence of the alkaliphilic bacterium Bacillus halodurans and genomic sequence comparison with Bacillus subtilis.</title>
        <authorList>
            <person name="Takami H."/>
            <person name="Nakasone K."/>
            <person name="Takaki Y."/>
            <person name="Maeno G."/>
            <person name="Sasaki R."/>
            <person name="Masui N."/>
            <person name="Fuji F."/>
            <person name="Hirama C."/>
            <person name="Nakamura Y."/>
            <person name="Ogasawara N."/>
            <person name="Kuhara S."/>
            <person name="Horikoshi K."/>
        </authorList>
    </citation>
    <scope>NUCLEOTIDE SEQUENCE [LARGE SCALE GENOMIC DNA]</scope>
    <source>
        <strain>ATCC BAA-125 / DSM 18197 / FERM 7344 / JCM 9153 / C-125</strain>
    </source>
</reference>
<dbReference type="EMBL" id="BA000004">
    <property type="protein sequence ID" value="BAB06504.1"/>
    <property type="molecule type" value="Genomic_DNA"/>
</dbReference>
<dbReference type="PIR" id="A83998">
    <property type="entry name" value="A83998"/>
</dbReference>
<dbReference type="RefSeq" id="WP_010898933.1">
    <property type="nucleotide sequence ID" value="NC_002570.2"/>
</dbReference>
<dbReference type="SMR" id="Q9K965"/>
<dbReference type="STRING" id="272558.gene:10728685"/>
<dbReference type="GeneID" id="87598303"/>
<dbReference type="KEGG" id="bha:BH2785"/>
<dbReference type="eggNOG" id="COG0781">
    <property type="taxonomic scope" value="Bacteria"/>
</dbReference>
<dbReference type="HOGENOM" id="CLU_087843_3_3_9"/>
<dbReference type="OrthoDB" id="9811381at2"/>
<dbReference type="Proteomes" id="UP000001258">
    <property type="component" value="Chromosome"/>
</dbReference>
<dbReference type="GO" id="GO:0005829">
    <property type="term" value="C:cytosol"/>
    <property type="evidence" value="ECO:0007669"/>
    <property type="project" value="TreeGrafter"/>
</dbReference>
<dbReference type="GO" id="GO:0003723">
    <property type="term" value="F:RNA binding"/>
    <property type="evidence" value="ECO:0007669"/>
    <property type="project" value="UniProtKB-UniRule"/>
</dbReference>
<dbReference type="GO" id="GO:0006353">
    <property type="term" value="P:DNA-templated transcription termination"/>
    <property type="evidence" value="ECO:0007669"/>
    <property type="project" value="UniProtKB-UniRule"/>
</dbReference>
<dbReference type="GO" id="GO:0031564">
    <property type="term" value="P:transcription antitermination"/>
    <property type="evidence" value="ECO:0007669"/>
    <property type="project" value="UniProtKB-KW"/>
</dbReference>
<dbReference type="CDD" id="cd00619">
    <property type="entry name" value="Terminator_NusB"/>
    <property type="match status" value="1"/>
</dbReference>
<dbReference type="Gene3D" id="1.10.940.10">
    <property type="entry name" value="NusB-like"/>
    <property type="match status" value="1"/>
</dbReference>
<dbReference type="HAMAP" id="MF_00073">
    <property type="entry name" value="NusB"/>
    <property type="match status" value="1"/>
</dbReference>
<dbReference type="InterPro" id="IPR035926">
    <property type="entry name" value="NusB-like_sf"/>
</dbReference>
<dbReference type="InterPro" id="IPR011605">
    <property type="entry name" value="NusB_fam"/>
</dbReference>
<dbReference type="InterPro" id="IPR006027">
    <property type="entry name" value="NusB_RsmB_TIM44"/>
</dbReference>
<dbReference type="NCBIfam" id="TIGR01951">
    <property type="entry name" value="nusB"/>
    <property type="match status" value="1"/>
</dbReference>
<dbReference type="PANTHER" id="PTHR11078:SF3">
    <property type="entry name" value="ANTITERMINATION NUSB DOMAIN-CONTAINING PROTEIN"/>
    <property type="match status" value="1"/>
</dbReference>
<dbReference type="PANTHER" id="PTHR11078">
    <property type="entry name" value="N UTILIZATION SUBSTANCE PROTEIN B-RELATED"/>
    <property type="match status" value="1"/>
</dbReference>
<dbReference type="Pfam" id="PF01029">
    <property type="entry name" value="NusB"/>
    <property type="match status" value="1"/>
</dbReference>
<dbReference type="SUPFAM" id="SSF48013">
    <property type="entry name" value="NusB-like"/>
    <property type="match status" value="1"/>
</dbReference>
<gene>
    <name evidence="1" type="primary">nusB</name>
    <name type="ordered locus">BH2785</name>
</gene>
<comment type="function">
    <text evidence="1">Involved in transcription antitermination. Required for transcription of ribosomal RNA (rRNA) genes. Binds specifically to the boxA antiterminator sequence of the ribosomal RNA (rrn) operons.</text>
</comment>
<comment type="similarity">
    <text evidence="1">Belongs to the NusB family.</text>
</comment>
<keyword id="KW-1185">Reference proteome</keyword>
<keyword id="KW-0694">RNA-binding</keyword>
<keyword id="KW-0804">Transcription</keyword>
<keyword id="KW-0889">Transcription antitermination</keyword>
<keyword id="KW-0805">Transcription regulation</keyword>
<feature type="chain" id="PRO_0000176507" description="Transcription antitermination protein NusB">
    <location>
        <begin position="1"/>
        <end position="134"/>
    </location>
</feature>